<sequence length="432" mass="48193">MQVSVETTQGLGRRVTITIAADSIETAVKSELVNVAKKVRIDGFRKGKVPMNIVAQRYGASVRQDVLGDLMSRNFIDAIIKEKINPAGAPTYVPGEYKLGEDFTYSVEFEVYPEVELQGLEAIEVEKPIVEVTDADVDGMLDTLRKQQATWKEKDGAVEAEDRVTIDFTGSVDGEEFEGGKASDFVLAMGQGRMIPGFEDGIKGHKAGEEFTIDVTFPEEYHAENLKGKAAKFAINLKKVEERELPELTAEFIKRFGVEDGSVEGLRAEVRKNMERELKSAIRNRVKSQAIEGLVKANDIDVPAALIDSEIDVLRRQAAQRFGGNEKQALELPRELFEEQAKRRVVVGLLLGEVIRTNELKADEERVKGLIEEMASAYEDPKEVIEFYSKNKELMDNMRNVALEEQAVEAVLAKAKVTEKETTFNELMNQQA</sequence>
<name>TIG_ECOLI</name>
<reference key="1">
    <citation type="journal article" date="1990" name="J. Bacteriol.">
        <title>Trigger factor depletion or overproduction causes defective cell division but does not block protein export.</title>
        <authorList>
            <person name="Guthrie B."/>
            <person name="Wickner W."/>
        </authorList>
    </citation>
    <scope>NUCLEOTIDE SEQUENCE [GENOMIC DNA]</scope>
    <scope>PARTIAL PROTEIN SEQUENCE</scope>
    <source>
        <strain>K12</strain>
    </source>
</reference>
<reference key="2">
    <citation type="submission" date="1997-01" db="EMBL/GenBank/DDBJ databases">
        <title>Sequence of minutes 4-25 of Escherichia coli.</title>
        <authorList>
            <person name="Chung E."/>
            <person name="Allen E."/>
            <person name="Araujo R."/>
            <person name="Aparicio A.M."/>
            <person name="Davis K."/>
            <person name="Duncan M."/>
            <person name="Federspiel N."/>
            <person name="Hyman R."/>
            <person name="Kalman S."/>
            <person name="Komp C."/>
            <person name="Kurdi O."/>
            <person name="Lew H."/>
            <person name="Lin D."/>
            <person name="Namath A."/>
            <person name="Oefner P."/>
            <person name="Roberts D."/>
            <person name="Schramm S."/>
            <person name="Davis R.W."/>
        </authorList>
    </citation>
    <scope>NUCLEOTIDE SEQUENCE [LARGE SCALE GENOMIC DNA]</scope>
    <source>
        <strain>K12 / MG1655 / ATCC 47076</strain>
    </source>
</reference>
<reference key="3">
    <citation type="journal article" date="1997" name="Science">
        <title>The complete genome sequence of Escherichia coli K-12.</title>
        <authorList>
            <person name="Blattner F.R."/>
            <person name="Plunkett G. III"/>
            <person name="Bloch C.A."/>
            <person name="Perna N.T."/>
            <person name="Burland V."/>
            <person name="Riley M."/>
            <person name="Collado-Vides J."/>
            <person name="Glasner J.D."/>
            <person name="Rode C.K."/>
            <person name="Mayhew G.F."/>
            <person name="Gregor J."/>
            <person name="Davis N.W."/>
            <person name="Kirkpatrick H.A."/>
            <person name="Goeden M.A."/>
            <person name="Rose D.J."/>
            <person name="Mau B."/>
            <person name="Shao Y."/>
        </authorList>
    </citation>
    <scope>NUCLEOTIDE SEQUENCE [LARGE SCALE GENOMIC DNA]</scope>
    <source>
        <strain>K12 / MG1655 / ATCC 47076</strain>
    </source>
</reference>
<reference key="4">
    <citation type="journal article" date="2006" name="Mol. Syst. Biol.">
        <title>Highly accurate genome sequences of Escherichia coli K-12 strains MG1655 and W3110.</title>
        <authorList>
            <person name="Hayashi K."/>
            <person name="Morooka N."/>
            <person name="Yamamoto Y."/>
            <person name="Fujita K."/>
            <person name="Isono K."/>
            <person name="Choi S."/>
            <person name="Ohtsubo E."/>
            <person name="Baba T."/>
            <person name="Wanner B.L."/>
            <person name="Mori H."/>
            <person name="Horiuchi T."/>
        </authorList>
    </citation>
    <scope>NUCLEOTIDE SEQUENCE [LARGE SCALE GENOMIC DNA]</scope>
    <source>
        <strain>K12 / W3110 / ATCC 27325 / DSM 5911</strain>
    </source>
</reference>
<reference key="5">
    <citation type="journal article" date="1989" name="EMBO J.">
        <title>Induction of a growth-phase-dependent promoter triggers transcription of bolA, an Escherichia coli morphogene.</title>
        <authorList>
            <person name="Aldea M."/>
            <person name="Garrido T."/>
            <person name="Hernandez-Chico C."/>
            <person name="Vicente M."/>
            <person name="Kushner S.R."/>
        </authorList>
    </citation>
    <scope>NUCLEOTIDE SEQUENCE [GENOMIC DNA] OF 1-145</scope>
</reference>
<reference key="6">
    <citation type="journal article" date="1988" name="Cell">
        <title>ProOmpA is stabilized for membrane translocation by either purified E. coli trigger factor or canine signal recognition particle.</title>
        <authorList>
            <person name="Crooke E."/>
            <person name="Guthrie B."/>
            <person name="Lecker S."/>
            <person name="Lill R."/>
            <person name="Wickner W."/>
        </authorList>
    </citation>
    <scope>PROTEIN SEQUENCE OF 1-13</scope>
</reference>
<reference key="7">
    <citation type="journal article" date="1997" name="Electrophoresis">
        <title>Comparing the predicted and observed properties of proteins encoded in the genome of Escherichia coli K-12.</title>
        <authorList>
            <person name="Link A.J."/>
            <person name="Robison K."/>
            <person name="Church G.M."/>
        </authorList>
    </citation>
    <scope>PROTEIN SEQUENCE OF 1-21 AND 38-58</scope>
    <source>
        <strain>K12 / EMG2</strain>
    </source>
</reference>
<reference key="8">
    <citation type="journal article" date="1996" name="Proc. Natl. Acad. Sci. U.S.A.">
        <title>Escherichia coli trigger factor is a prolyl isomerase that associates with nascent polypeptide chains.</title>
        <authorList>
            <person name="Hesterkamp T."/>
            <person name="Hauser S."/>
            <person name="Lutcke H."/>
            <person name="Bukau B."/>
        </authorList>
    </citation>
    <scope>PROTEIN SEQUENCE OF 1-7</scope>
    <scope>FUNCTION AS A PPIASE</scope>
    <scope>SUBCELLULAR LOCATION</scope>
    <scope>RIBOSOME-BINDING</scope>
</reference>
<reference key="9">
    <citation type="journal article" date="1996" name="FEBS Lett.">
        <title>An 11.8 kDa proteolytic fragment of the E. coli trigger factor represents the domain carrying the peptidyl-prolyl cis/trans isomerase activity.</title>
        <authorList>
            <person name="Stoller G."/>
            <person name="Tradler T."/>
            <person name="Ruecknagel K.P."/>
            <person name="Rahfeld J.-U."/>
            <person name="Fischer G."/>
        </authorList>
    </citation>
    <scope>PROTEIN SEQUENCE OF 145-174</scope>
</reference>
<reference key="10">
    <citation type="journal article" date="1990" name="J. Biol. Chem.">
        <title>Sequence and structure of Clp P, the proteolytic component of the ATP-dependent Clp protease of Escherichia coli.</title>
        <authorList>
            <person name="Maurizi M.R."/>
            <person name="Clark W.P."/>
            <person name="Katayama Y."/>
            <person name="Rudikoff S."/>
            <person name="Pumphrey J."/>
            <person name="Bowers B."/>
            <person name="Gottesman S."/>
        </authorList>
    </citation>
    <scope>NUCLEOTIDE SEQUENCE [GENOMIC DNA] OF 390-432</scope>
</reference>
<reference key="11">
    <citation type="journal article" date="1995" name="EMBO J.">
        <title>Early events in preprotein recognition in E. coli: interaction of SRP and trigger factor with nascent polypeptides.</title>
        <authorList>
            <person name="Valent Q.A."/>
            <person name="Kendall D.A."/>
            <person name="High S."/>
            <person name="Kusters R."/>
            <person name="Oudega B."/>
            <person name="Luirink J."/>
        </authorList>
    </citation>
    <scope>FUNCTION</scope>
</reference>
<reference key="12">
    <citation type="journal article" date="1997" name="Electrophoresis">
        <title>Escherichia coli proteome analysis using the gene-protein database.</title>
        <authorList>
            <person name="VanBogelen R.A."/>
            <person name="Abshire K.Z."/>
            <person name="Moldover B."/>
            <person name="Olson E.R."/>
            <person name="Neidhardt F.C."/>
        </authorList>
    </citation>
    <scope>IDENTIFICATION BY 2D-GEL</scope>
</reference>
<reference key="13">
    <citation type="journal article" date="2002" name="Biol. Chem.">
        <title>Three-state equilibrium of Escherichia coli trigger factor.</title>
        <authorList>
            <person name="Patzelt H."/>
            <person name="Kramer G."/>
            <person name="Rauch T."/>
            <person name="Schonfeld H.J."/>
            <person name="Bukau B."/>
            <person name="Deuerling E."/>
        </authorList>
    </citation>
    <scope>SUBUNIT</scope>
</reference>
<reference key="14">
    <citation type="journal article" date="2002" name="Nature">
        <title>L23 protein functions as a chaperone docking site on the ribosome.</title>
        <authorList>
            <person name="Kramer G."/>
            <person name="Rauch T."/>
            <person name="Rist W."/>
            <person name="Vorderwuelbecke S."/>
            <person name="Patzelt H."/>
            <person name="Schulze-Specking A."/>
            <person name="Ban N."/>
            <person name="Deuerling E."/>
            <person name="Bukau B."/>
        </authorList>
    </citation>
    <scope>BINDING TO RIBOSOMAL PROTEINS L23 AND L29</scope>
    <scope>MUTAGENESIS OF 44-PHE--LYS-46</scope>
    <source>
        <strain>K12 / MC4100 / ATCC 35695 / DSM 6574</strain>
    </source>
</reference>
<reference key="15">
    <citation type="journal article" date="2003" name="J. Cell Biol.">
        <title>Interplay of signal recognition particle and trigger factor at L23 near the nascent chain exit site on the Escherichia coli ribosome.</title>
        <authorList>
            <person name="Ullers R.S."/>
            <person name="Houben E.N.G."/>
            <person name="Raine A."/>
            <person name="ten Hagen-Jongman C.M."/>
            <person name="Ehrenberg M."/>
            <person name="Brunner J."/>
            <person name="Oudega B."/>
            <person name="Harms N."/>
            <person name="Luirink J."/>
        </authorList>
    </citation>
    <scope>CROSS-LINKS TO NASCENT PROTEIN CHAINS</scope>
    <source>
        <strain>K12 / MC4100 / ATCC 35695 / DSM 6574</strain>
    </source>
</reference>
<reference key="16">
    <citation type="journal article" date="2004" name="EMBO Rep.">
        <title>In vivo analysis of the overlapping functions of DnaK and trigger factor.</title>
        <authorList>
            <person name="Genevaux P."/>
            <person name="Keppel F."/>
            <person name="Schwager F."/>
            <person name="Langendijk-Genevaux P.S."/>
            <person name="Hartl F.U."/>
            <person name="Georgopoulos C."/>
        </authorList>
    </citation>
    <scope>DOMAIN</scope>
    <scope>DISPENSABILITY OF PPIASE FOR CHAPERONE FUNCTION</scope>
    <scope>DISRUPTION PHENOTYPE</scope>
    <source>
        <strain>K12 / MC4100 / ATCC 35695 / DSM 6574</strain>
    </source>
</reference>
<reference key="17">
    <citation type="journal article" date="2003" name="J. Mol. Biol.">
        <title>Localization of the trigger factor binding site on the ribosomal 50S subunit.</title>
        <authorList>
            <person name="Blaha G."/>
            <person name="Wilson D.N."/>
            <person name="Stoller G."/>
            <person name="Fischer G."/>
            <person name="Willumeit R."/>
            <person name="Nierhaus K.H."/>
        </authorList>
    </citation>
    <scope>MAY BIND TO THE RIBOSOME AS A DIMER</scope>
    <source>
        <strain>MRE-600</strain>
    </source>
</reference>
<reference key="18">
    <citation type="journal article" date="2004" name="Proc. Natl. Acad. Sci. U.S.A.">
        <title>Trigger factor binds to ribosome-signal-recognition particle (SRP) complexes and is excluded by binding of the SRP receptor.</title>
        <authorList>
            <person name="Buskiewicz I."/>
            <person name="Deuerling E."/>
            <person name="Gu S.-Q."/>
            <person name="Joeckel J."/>
            <person name="Rodnina M.V."/>
            <person name="Bukau B."/>
            <person name="Wintermeyer W."/>
        </authorList>
    </citation>
    <scope>SIMULTANEOUS BINDING OF TRIGGER FACTOR AND SRP TO THE RIBOSOME</scope>
    <source>
        <strain>MRE-600</strain>
    </source>
</reference>
<reference key="19">
    <citation type="journal article" date="2005" name="Biochem. Biophys. Res. Commun.">
        <title>The mono-ADP-ribosyltransferases Alt and ModB of bacteriophage T4: target proteins identified.</title>
        <authorList>
            <person name="Depping R."/>
            <person name="Lohaus C."/>
            <person name="Meyer H.E."/>
            <person name="Ruger W."/>
        </authorList>
    </citation>
    <scope>ADP-RIBOSYLATION AT ARG-45 (MICROBIAL INFECTION)</scope>
</reference>
<reference key="20">
    <citation type="journal article" date="2014" name="Science">
        <title>Structural basis for protein antiaggregation activity of the trigger factor chaperone.</title>
        <authorList>
            <person name="Saio T."/>
            <person name="Guan X."/>
            <person name="Rossi P."/>
            <person name="Economou A."/>
            <person name="Kalodimos C.G."/>
        </authorList>
    </citation>
    <scope>STRUCTURE BY NMR IN COMPLEX WITH PHOA SUBSTRATE</scope>
    <scope>FUNCTION</scope>
    <scope>SUBUNIT</scope>
    <scope>DOMAIN</scope>
    <scope>MUTAGENESIS OF MET-140 AND 374-MET--PHE-387</scope>
</reference>
<organism>
    <name type="scientific">Escherichia coli (strain K12)</name>
    <dbReference type="NCBI Taxonomy" id="83333"/>
    <lineage>
        <taxon>Bacteria</taxon>
        <taxon>Pseudomonadati</taxon>
        <taxon>Pseudomonadota</taxon>
        <taxon>Gammaproteobacteria</taxon>
        <taxon>Enterobacterales</taxon>
        <taxon>Enterobacteriaceae</taxon>
        <taxon>Escherichia</taxon>
    </lineage>
</organism>
<accession>P0A850</accession>
<accession>P15299</accession>
<accession>P22257</accession>
<accession>P77603</accession>
<accession>Q2MBZ0</accession>
<keyword id="KW-0002">3D-structure</keyword>
<keyword id="KW-0013">ADP-ribosylation</keyword>
<keyword id="KW-0131">Cell cycle</keyword>
<keyword id="KW-0132">Cell division</keyword>
<keyword id="KW-0143">Chaperone</keyword>
<keyword id="KW-0963">Cytoplasm</keyword>
<keyword id="KW-0903">Direct protein sequencing</keyword>
<keyword id="KW-0413">Isomerase</keyword>
<keyword id="KW-1185">Reference proteome</keyword>
<keyword id="KW-0697">Rotamase</keyword>
<proteinExistence type="evidence at protein level"/>
<evidence type="ECO:0000269" key="1">
    <source>
    </source>
</evidence>
<evidence type="ECO:0000269" key="2">
    <source>
    </source>
</evidence>
<evidence type="ECO:0000269" key="3">
    <source>
    </source>
</evidence>
<evidence type="ECO:0000269" key="4">
    <source>
    </source>
</evidence>
<evidence type="ECO:0000269" key="5">
    <source>
    </source>
</evidence>
<evidence type="ECO:0000269" key="6">
    <source>
    </source>
</evidence>
<evidence type="ECO:0000269" key="7">
    <source>
    </source>
</evidence>
<evidence type="ECO:0000269" key="8">
    <source>
    </source>
</evidence>
<evidence type="ECO:0000269" key="9">
    <source>
    </source>
</evidence>
<evidence type="ECO:0000305" key="10"/>
<evidence type="ECO:0007829" key="11">
    <source>
        <dbReference type="PDB" id="1L1P"/>
    </source>
</evidence>
<evidence type="ECO:0007829" key="12">
    <source>
        <dbReference type="PDB" id="1OMS"/>
    </source>
</evidence>
<evidence type="ECO:0007829" key="13">
    <source>
        <dbReference type="PDB" id="1P9Y"/>
    </source>
</evidence>
<evidence type="ECO:0007829" key="14">
    <source>
        <dbReference type="PDB" id="1W26"/>
    </source>
</evidence>
<evidence type="ECO:0007829" key="15">
    <source>
        <dbReference type="PDB" id="5OWI"/>
    </source>
</evidence>
<evidence type="ECO:0007829" key="16">
    <source>
        <dbReference type="PDB" id="6D6S"/>
    </source>
</evidence>
<feature type="chain" id="PRO_0000179347" description="Trigger factor">
    <location>
        <begin position="1"/>
        <end position="432"/>
    </location>
</feature>
<feature type="domain" description="PPIase FKBP-type">
    <location>
        <begin position="161"/>
        <end position="246"/>
    </location>
</feature>
<feature type="region of interest" description="Ribosome-binding" evidence="4">
    <location>
        <begin position="1"/>
        <end position="112"/>
    </location>
</feature>
<feature type="region of interest" description="Dispensable for chaperone activity, although its removal significantly decreases antiaggregation activity" evidence="4 7">
    <location>
        <begin position="148"/>
        <end position="251"/>
    </location>
</feature>
<feature type="modified residue" description="ADP-ribosylarginine" evidence="6">
    <location>
        <position position="45"/>
    </location>
</feature>
<feature type="mutagenesis site" description="Decreases association with ribosomes." evidence="1">
    <original>FRK</original>
    <variation>AAA</variation>
    <location>
        <begin position="44"/>
        <end position="46"/>
    </location>
</feature>
<feature type="mutagenesis site" description="Significantly decreases antiaggregation activity." evidence="7">
    <original>M</original>
    <variation>E</variation>
    <location>
        <position position="140"/>
    </location>
</feature>
<feature type="mutagenesis site" description="Significantly decreased affinity for substrate PhoA, significantly decreases antiaggregation activity." evidence="7">
    <original>MASAYEDPKEVIEF</original>
    <variation>AASAAEDPKEAIEA</variation>
    <location>
        <begin position="374"/>
        <end position="387"/>
    </location>
</feature>
<feature type="sequence conflict" description="In Ref. 1; AAA62791." evidence="10" ref="1">
    <original>Q</original>
    <variation>E</variation>
    <location>
        <position position="118"/>
    </location>
</feature>
<feature type="sequence conflict" description="In Ref. 1; AAA62791." evidence="10" ref="1">
    <original>KSAIRNRVK</original>
    <variation>RAPSVTALS</variation>
    <location>
        <begin position="279"/>
        <end position="287"/>
    </location>
</feature>
<feature type="strand" evidence="13">
    <location>
        <begin position="2"/>
        <end position="7"/>
    </location>
</feature>
<feature type="strand" evidence="13">
    <location>
        <begin position="12"/>
        <end position="19"/>
    </location>
</feature>
<feature type="helix" evidence="13">
    <location>
        <begin position="21"/>
        <end position="36"/>
    </location>
</feature>
<feature type="helix" evidence="14">
    <location>
        <begin position="42"/>
        <end position="44"/>
    </location>
</feature>
<feature type="strand" evidence="12">
    <location>
        <begin position="46"/>
        <end position="48"/>
    </location>
</feature>
<feature type="helix" evidence="13">
    <location>
        <begin position="51"/>
        <end position="81"/>
    </location>
</feature>
<feature type="strand" evidence="13">
    <location>
        <begin position="87"/>
        <end position="94"/>
    </location>
</feature>
<feature type="strand" evidence="13">
    <location>
        <begin position="99"/>
        <end position="101"/>
    </location>
</feature>
<feature type="strand" evidence="13">
    <location>
        <begin position="103"/>
        <end position="110"/>
    </location>
</feature>
<feature type="turn" evidence="14">
    <location>
        <begin position="120"/>
        <end position="122"/>
    </location>
</feature>
<feature type="strand" evidence="14">
    <location>
        <begin position="127"/>
        <end position="129"/>
    </location>
</feature>
<feature type="helix" evidence="14">
    <location>
        <begin position="134"/>
        <end position="147"/>
    </location>
</feature>
<feature type="strand" evidence="15">
    <location>
        <begin position="150"/>
        <end position="153"/>
    </location>
</feature>
<feature type="strand" evidence="11">
    <location>
        <begin position="155"/>
        <end position="157"/>
    </location>
</feature>
<feature type="strand" evidence="14">
    <location>
        <begin position="163"/>
        <end position="166"/>
    </location>
</feature>
<feature type="strand" evidence="14">
    <location>
        <begin position="168"/>
        <end position="174"/>
    </location>
</feature>
<feature type="strand" evidence="14">
    <location>
        <begin position="183"/>
        <end position="188"/>
    </location>
</feature>
<feature type="strand" evidence="16">
    <location>
        <begin position="189"/>
        <end position="191"/>
    </location>
</feature>
<feature type="helix" evidence="14">
    <location>
        <begin position="198"/>
        <end position="201"/>
    </location>
</feature>
<feature type="strand" evidence="14">
    <location>
        <begin position="202"/>
        <end position="204"/>
    </location>
</feature>
<feature type="strand" evidence="14">
    <location>
        <begin position="210"/>
        <end position="216"/>
    </location>
</feature>
<feature type="turn" evidence="14">
    <location>
        <begin position="224"/>
        <end position="226"/>
    </location>
</feature>
<feature type="strand" evidence="14">
    <location>
        <begin position="230"/>
        <end position="236"/>
    </location>
</feature>
<feature type="strand" evidence="15">
    <location>
        <begin position="239"/>
        <end position="244"/>
    </location>
</feature>
<feature type="helix" evidence="14">
    <location>
        <begin position="250"/>
        <end position="253"/>
    </location>
</feature>
<feature type="turn" evidence="14">
    <location>
        <begin position="254"/>
        <end position="257"/>
    </location>
</feature>
<feature type="helix" evidence="14">
    <location>
        <begin position="263"/>
        <end position="297"/>
    </location>
</feature>
<feature type="helix" evidence="14">
    <location>
        <begin position="304"/>
        <end position="319"/>
    </location>
</feature>
<feature type="turn" evidence="14">
    <location>
        <begin position="320"/>
        <end position="323"/>
    </location>
</feature>
<feature type="helix" evidence="15">
    <location>
        <begin position="328"/>
        <end position="331"/>
    </location>
</feature>
<feature type="helix" evidence="14">
    <location>
        <begin position="334"/>
        <end position="336"/>
    </location>
</feature>
<feature type="helix" evidence="14">
    <location>
        <begin position="338"/>
        <end position="357"/>
    </location>
</feature>
<feature type="helix" evidence="14">
    <location>
        <begin position="364"/>
        <end position="375"/>
    </location>
</feature>
<feature type="helix" evidence="14">
    <location>
        <begin position="381"/>
        <end position="390"/>
    </location>
</feature>
<feature type="helix" evidence="14">
    <location>
        <begin position="392"/>
        <end position="412"/>
    </location>
</feature>
<feature type="strand" evidence="14">
    <location>
        <begin position="419"/>
        <end position="421"/>
    </location>
</feature>
<feature type="helix" evidence="14">
    <location>
        <begin position="424"/>
        <end position="427"/>
    </location>
</feature>
<dbReference type="EC" id="5.2.1.8" evidence="9"/>
<dbReference type="EMBL" id="M34066">
    <property type="protein sequence ID" value="AAA62791.1"/>
    <property type="molecule type" value="Genomic_DNA"/>
</dbReference>
<dbReference type="EMBL" id="U00096">
    <property type="protein sequence ID" value="AAC73539.1"/>
    <property type="molecule type" value="Genomic_DNA"/>
</dbReference>
<dbReference type="EMBL" id="AP009048">
    <property type="protein sequence ID" value="BAE76216.1"/>
    <property type="molecule type" value="Genomic_DNA"/>
</dbReference>
<dbReference type="EMBL" id="U82664">
    <property type="protein sequence ID" value="AAB40192.1"/>
    <property type="molecule type" value="Genomic_DNA"/>
</dbReference>
<dbReference type="EMBL" id="X17642">
    <property type="protein sequence ID" value="CAA35634.1"/>
    <property type="molecule type" value="Genomic_DNA"/>
</dbReference>
<dbReference type="EMBL" id="J05534">
    <property type="protein sequence ID" value="AAA23587.1"/>
    <property type="molecule type" value="Genomic_DNA"/>
</dbReference>
<dbReference type="PIR" id="D64773">
    <property type="entry name" value="D64773"/>
</dbReference>
<dbReference type="RefSeq" id="NP_414970.1">
    <property type="nucleotide sequence ID" value="NC_000913.3"/>
</dbReference>
<dbReference type="RefSeq" id="WP_001198386.1">
    <property type="nucleotide sequence ID" value="NZ_STEB01000007.1"/>
</dbReference>
<dbReference type="PDB" id="1L1P">
    <property type="method" value="NMR"/>
    <property type="chains" value="A=148-249"/>
</dbReference>
<dbReference type="PDB" id="1OMS">
    <property type="method" value="X-ray"/>
    <property type="resolution" value="2.30 A"/>
    <property type="chains" value="A/B/C=1-118"/>
</dbReference>
<dbReference type="PDB" id="1P9Y">
    <property type="method" value="X-ray"/>
    <property type="resolution" value="2.15 A"/>
    <property type="chains" value="A/B=1-118"/>
</dbReference>
<dbReference type="PDB" id="1W26">
    <property type="method" value="X-ray"/>
    <property type="resolution" value="2.70 A"/>
    <property type="chains" value="A/B=1-432"/>
</dbReference>
<dbReference type="PDB" id="1W2B">
    <property type="method" value="X-ray"/>
    <property type="resolution" value="3.50 A"/>
    <property type="chains" value="5=1-144"/>
</dbReference>
<dbReference type="PDB" id="2MLX">
    <property type="method" value="NMR"/>
    <property type="chains" value="A=1-432"/>
</dbReference>
<dbReference type="PDB" id="2MLY">
    <property type="method" value="NMR"/>
    <property type="chains" value="A=1-432"/>
</dbReference>
<dbReference type="PDB" id="2MLZ">
    <property type="method" value="NMR"/>
    <property type="chains" value="A=1-432"/>
</dbReference>
<dbReference type="PDB" id="2VRH">
    <property type="method" value="EM"/>
    <property type="resolution" value="19.00 A"/>
    <property type="chains" value="A=1-432"/>
</dbReference>
<dbReference type="PDB" id="4URD">
    <property type="method" value="EM"/>
    <property type="resolution" value="7.70 A"/>
    <property type="chains" value="A=1-115"/>
</dbReference>
<dbReference type="PDB" id="5OWI">
    <property type="method" value="NMR"/>
    <property type="chains" value="A/B=1-432"/>
</dbReference>
<dbReference type="PDB" id="5OWJ">
    <property type="method" value="NMR"/>
    <property type="chains" value="A/B=1-432"/>
</dbReference>
<dbReference type="PDB" id="5ZR0">
    <property type="method" value="NMR"/>
    <property type="chains" value="A=148-249"/>
</dbReference>
<dbReference type="PDB" id="6D6S">
    <property type="method" value="NMR"/>
    <property type="chains" value="A/B=1-432"/>
</dbReference>
<dbReference type="PDB" id="7D6Z">
    <property type="method" value="EM"/>
    <property type="resolution" value="3.40 A"/>
    <property type="chains" value="h=1-117"/>
</dbReference>
<dbReference type="PDB" id="7D80">
    <property type="method" value="EM"/>
    <property type="resolution" value="4.10 A"/>
    <property type="chains" value="5=1-432"/>
</dbReference>
<dbReference type="PDBsum" id="1L1P"/>
<dbReference type="PDBsum" id="1OMS"/>
<dbReference type="PDBsum" id="1P9Y"/>
<dbReference type="PDBsum" id="1W26"/>
<dbReference type="PDBsum" id="1W2B"/>
<dbReference type="PDBsum" id="2MLX"/>
<dbReference type="PDBsum" id="2MLY"/>
<dbReference type="PDBsum" id="2MLZ"/>
<dbReference type="PDBsum" id="2VRH"/>
<dbReference type="PDBsum" id="4URD"/>
<dbReference type="PDBsum" id="5OWI"/>
<dbReference type="PDBsum" id="5OWJ"/>
<dbReference type="PDBsum" id="5ZR0"/>
<dbReference type="PDBsum" id="6D6S"/>
<dbReference type="PDBsum" id="7D6Z"/>
<dbReference type="PDBsum" id="7D80"/>
<dbReference type="EMDB" id="EMD-1499"/>
<dbReference type="EMDB" id="EMD-2695"/>
<dbReference type="EMDB" id="EMD-30598"/>
<dbReference type="EMDB" id="EMD-30611"/>
<dbReference type="SMR" id="P0A850"/>
<dbReference type="BioGRID" id="4259841">
    <property type="interactions" value="591"/>
</dbReference>
<dbReference type="BioGRID" id="849470">
    <property type="interactions" value="2"/>
</dbReference>
<dbReference type="DIP" id="DIP-36226N"/>
<dbReference type="FunCoup" id="P0A850">
    <property type="interactions" value="976"/>
</dbReference>
<dbReference type="IntAct" id="P0A850">
    <property type="interactions" value="131"/>
</dbReference>
<dbReference type="STRING" id="511145.b0436"/>
<dbReference type="jPOST" id="P0A850"/>
<dbReference type="PaxDb" id="511145-b0436"/>
<dbReference type="EnsemblBacteria" id="AAC73539">
    <property type="protein sequence ID" value="AAC73539"/>
    <property type="gene ID" value="b0436"/>
</dbReference>
<dbReference type="GeneID" id="75202861"/>
<dbReference type="GeneID" id="945081"/>
<dbReference type="KEGG" id="ecj:JW0426"/>
<dbReference type="KEGG" id="eco:b0436"/>
<dbReference type="KEGG" id="ecoc:C3026_02135"/>
<dbReference type="PATRIC" id="fig|1411691.4.peg.1840"/>
<dbReference type="EchoBASE" id="EB0996"/>
<dbReference type="eggNOG" id="COG0544">
    <property type="taxonomic scope" value="Bacteria"/>
</dbReference>
<dbReference type="HOGENOM" id="CLU_033058_2_0_6"/>
<dbReference type="InParanoid" id="P0A850"/>
<dbReference type="OMA" id="KGIKTQF"/>
<dbReference type="OrthoDB" id="9767721at2"/>
<dbReference type="PhylomeDB" id="P0A850"/>
<dbReference type="BioCyc" id="EcoCyc:EG11003-MONOMER"/>
<dbReference type="BioCyc" id="MetaCyc:EG11003-MONOMER"/>
<dbReference type="EvolutionaryTrace" id="P0A850"/>
<dbReference type="PRO" id="PR:P0A850"/>
<dbReference type="Proteomes" id="UP000000625">
    <property type="component" value="Chromosome"/>
</dbReference>
<dbReference type="GO" id="GO:0005829">
    <property type="term" value="C:cytosol"/>
    <property type="evidence" value="ECO:0000314"/>
    <property type="project" value="EcoCyc"/>
</dbReference>
<dbReference type="GO" id="GO:0016020">
    <property type="term" value="C:membrane"/>
    <property type="evidence" value="ECO:0007005"/>
    <property type="project" value="UniProtKB"/>
</dbReference>
<dbReference type="GO" id="GO:0042802">
    <property type="term" value="F:identical protein binding"/>
    <property type="evidence" value="ECO:0000353"/>
    <property type="project" value="IntAct"/>
</dbReference>
<dbReference type="GO" id="GO:0003755">
    <property type="term" value="F:peptidyl-prolyl cis-trans isomerase activity"/>
    <property type="evidence" value="ECO:0000314"/>
    <property type="project" value="EcoCyc"/>
</dbReference>
<dbReference type="GO" id="GO:0044183">
    <property type="term" value="F:protein folding chaperone"/>
    <property type="evidence" value="ECO:0000314"/>
    <property type="project" value="EcoCyc"/>
</dbReference>
<dbReference type="GO" id="GO:0043022">
    <property type="term" value="F:ribosome binding"/>
    <property type="evidence" value="ECO:0000314"/>
    <property type="project" value="EcoCyc"/>
</dbReference>
<dbReference type="GO" id="GO:0051083">
    <property type="term" value="P:'de novo' cotranslational protein folding"/>
    <property type="evidence" value="ECO:0000314"/>
    <property type="project" value="EcoCyc"/>
</dbReference>
<dbReference type="GO" id="GO:0051301">
    <property type="term" value="P:cell division"/>
    <property type="evidence" value="ECO:0007669"/>
    <property type="project" value="UniProtKB-KW"/>
</dbReference>
<dbReference type="GO" id="GO:0061077">
    <property type="term" value="P:chaperone-mediated protein folding"/>
    <property type="evidence" value="ECO:0000314"/>
    <property type="project" value="EcoCyc"/>
</dbReference>
<dbReference type="GO" id="GO:0015031">
    <property type="term" value="P:protein transport"/>
    <property type="evidence" value="ECO:0007669"/>
    <property type="project" value="UniProtKB-UniRule"/>
</dbReference>
<dbReference type="GO" id="GO:0043335">
    <property type="term" value="P:protein unfolding"/>
    <property type="evidence" value="ECO:0000314"/>
    <property type="project" value="EcoCyc"/>
</dbReference>
<dbReference type="GO" id="GO:0009408">
    <property type="term" value="P:response to heat"/>
    <property type="evidence" value="ECO:0000315"/>
    <property type="project" value="EcoCyc"/>
</dbReference>
<dbReference type="GO" id="GO:1990169">
    <property type="term" value="P:stress response to copper ion"/>
    <property type="evidence" value="ECO:0000315"/>
    <property type="project" value="EcoCyc"/>
</dbReference>
<dbReference type="FunFam" id="1.10.3120.10:FF:000001">
    <property type="entry name" value="Trigger factor"/>
    <property type="match status" value="1"/>
</dbReference>
<dbReference type="FunFam" id="3.10.50.40:FF:000001">
    <property type="entry name" value="Trigger factor"/>
    <property type="match status" value="1"/>
</dbReference>
<dbReference type="FunFam" id="3.30.70.1050:FF:000001">
    <property type="entry name" value="Trigger factor"/>
    <property type="match status" value="1"/>
</dbReference>
<dbReference type="Gene3D" id="3.10.50.40">
    <property type="match status" value="1"/>
</dbReference>
<dbReference type="Gene3D" id="3.30.70.1050">
    <property type="entry name" value="Trigger factor ribosome-binding domain"/>
    <property type="match status" value="1"/>
</dbReference>
<dbReference type="Gene3D" id="1.10.3120.10">
    <property type="entry name" value="Trigger factor, C-terminal domain"/>
    <property type="match status" value="1"/>
</dbReference>
<dbReference type="HAMAP" id="MF_00303">
    <property type="entry name" value="Trigger_factor_Tig"/>
    <property type="match status" value="1"/>
</dbReference>
<dbReference type="InterPro" id="IPR046357">
    <property type="entry name" value="PPIase_dom_sf"/>
</dbReference>
<dbReference type="InterPro" id="IPR001179">
    <property type="entry name" value="PPIase_FKBP_dom"/>
</dbReference>
<dbReference type="InterPro" id="IPR005215">
    <property type="entry name" value="Trig_fac"/>
</dbReference>
<dbReference type="InterPro" id="IPR008880">
    <property type="entry name" value="Trigger_fac_C"/>
</dbReference>
<dbReference type="InterPro" id="IPR037041">
    <property type="entry name" value="Trigger_fac_C_sf"/>
</dbReference>
<dbReference type="InterPro" id="IPR008881">
    <property type="entry name" value="Trigger_fac_ribosome-bd_bac"/>
</dbReference>
<dbReference type="InterPro" id="IPR036611">
    <property type="entry name" value="Trigger_fac_ribosome-bd_sf"/>
</dbReference>
<dbReference type="InterPro" id="IPR027304">
    <property type="entry name" value="Trigger_fact/SurA_dom_sf"/>
</dbReference>
<dbReference type="NCBIfam" id="TIGR00115">
    <property type="entry name" value="tig"/>
    <property type="match status" value="1"/>
</dbReference>
<dbReference type="PANTHER" id="PTHR30560">
    <property type="entry name" value="TRIGGER FACTOR CHAPERONE AND PEPTIDYL-PROLYL CIS/TRANS ISOMERASE"/>
    <property type="match status" value="1"/>
</dbReference>
<dbReference type="PANTHER" id="PTHR30560:SF3">
    <property type="entry name" value="TRIGGER FACTOR-LIKE PROTEIN TIG, CHLOROPLASTIC"/>
    <property type="match status" value="1"/>
</dbReference>
<dbReference type="Pfam" id="PF00254">
    <property type="entry name" value="FKBP_C"/>
    <property type="match status" value="1"/>
</dbReference>
<dbReference type="Pfam" id="PF05698">
    <property type="entry name" value="Trigger_C"/>
    <property type="match status" value="1"/>
</dbReference>
<dbReference type="Pfam" id="PF05697">
    <property type="entry name" value="Trigger_N"/>
    <property type="match status" value="1"/>
</dbReference>
<dbReference type="PIRSF" id="PIRSF003095">
    <property type="entry name" value="Trigger_factor"/>
    <property type="match status" value="1"/>
</dbReference>
<dbReference type="SUPFAM" id="SSF54534">
    <property type="entry name" value="FKBP-like"/>
    <property type="match status" value="1"/>
</dbReference>
<dbReference type="SUPFAM" id="SSF109998">
    <property type="entry name" value="Triger factor/SurA peptide-binding domain-like"/>
    <property type="match status" value="1"/>
</dbReference>
<dbReference type="SUPFAM" id="SSF102735">
    <property type="entry name" value="Trigger factor ribosome-binding domain"/>
    <property type="match status" value="1"/>
</dbReference>
<dbReference type="PROSITE" id="PS50059">
    <property type="entry name" value="FKBP_PPIASE"/>
    <property type="match status" value="1"/>
</dbReference>
<protein>
    <recommendedName>
        <fullName>Trigger factor</fullName>
        <shortName>TF</shortName>
        <ecNumber evidence="9">5.2.1.8</ecNumber>
    </recommendedName>
    <alternativeName>
        <fullName>PPIase</fullName>
    </alternativeName>
</protein>
<gene>
    <name type="primary">tig</name>
    <name type="ordered locus">b0436</name>
    <name type="ordered locus">JW0426</name>
</gene>
<comment type="function">
    <text evidence="1 7 8 9">Involved in protein export. Acts as a chaperone by maintaining the newly synthesized secretory and non-secretory proteins in an open conformation. Binds to 3 regions of unfolded substrate PhoA, preferring aromatic and hydrophobic residues, keeping it stretched out and unable to form aggregates (PubMed:24812405). Binds to nascent polypeptide chains via ribosomal protein L23 (PubMed:12226666). Functions as a peptidyl-prolyl cis-trans isomerase in vitro, this activity is dispensible in vivo for chaperone activity.</text>
</comment>
<comment type="catalytic activity">
    <reaction evidence="9">
        <text>[protein]-peptidylproline (omega=180) = [protein]-peptidylproline (omega=0)</text>
        <dbReference type="Rhea" id="RHEA:16237"/>
        <dbReference type="Rhea" id="RHEA-COMP:10747"/>
        <dbReference type="Rhea" id="RHEA-COMP:10748"/>
        <dbReference type="ChEBI" id="CHEBI:83833"/>
        <dbReference type="ChEBI" id="CHEBI:83834"/>
        <dbReference type="EC" id="5.2.1.8"/>
    </reaction>
</comment>
<comment type="subunit">
    <text evidence="1 2 3 5 7">Homodimer and monomer. In vivo most of the ribosomes are in complex with monomeric TF (PubMed:12452438); binding as a dimer has also been suggested (PubMed:12581648). Uncomplexed TF is in a monomer-dimer equilibrium with approximately two thirds of TF existing in a dimeric state; binding to substrate PhoA induces monomerization, 3 TF monomers bind somewhat independently to a single substrate molecule (PubMed:12452438, PubMed:24812405). TF and SRP can simultaneously bind to ribosomes; TF binding is abolished when SRP is bound to FtsY in the presence of a non-hydrolyzable GTP analog (PubMed:15148364). Contacts ribosomal proteins L23 and L29 (PubMed:12226666).</text>
</comment>
<comment type="interaction">
    <interactant intactId="EBI-544862">
        <id>P0A850</id>
    </interactant>
    <interactant intactId="EBI-371347">
        <id>P0A910</id>
        <label>ompA</label>
    </interactant>
    <organismsDiffer>false</organismsDiffer>
    <experiments>3</experiments>
</comment>
<comment type="interaction">
    <interactant intactId="EBI-544862">
        <id>P0A850</id>
    </interactant>
    <interactant intactId="EBI-543024">
        <id>P0A7M2</id>
        <label>rpmB</label>
    </interactant>
    <organismsDiffer>false</organismsDiffer>
    <experiments>4</experiments>
</comment>
<comment type="interaction">
    <interactant intactId="EBI-544862">
        <id>P0A850</id>
    </interactant>
    <interactant intactId="EBI-543074">
        <id>P02359</id>
        <label>rpsG</label>
    </interactant>
    <organismsDiffer>false</organismsDiffer>
    <experiments>4</experiments>
</comment>
<comment type="interaction">
    <interactant intactId="EBI-544862">
        <id>P0A850</id>
    </interactant>
    <interactant intactId="EBI-544862">
        <id>P0A850</id>
        <label>tig</label>
    </interactant>
    <organismsDiffer>false</organismsDiffer>
    <experiments>2</experiments>
</comment>
<comment type="subcellular location">
    <subcellularLocation>
        <location evidence="9">Cytoplasm</location>
    </subcellularLocation>
    <text evidence="9">About half TF is bound to the ribosome near the polypeptide exit tunnel while the other half is free in the cytoplasm.</text>
</comment>
<comment type="domain">
    <text evidence="4 7">Consists of 3 domains; the N-terminus (residues 1-112) binds the ribosome, the middle domain (residues 150-246) has PPIase activity, while the discontinuous C-terminus (residues 113-149 and 247-432) binds substrate and has intrinsic chaperone activity on its own.</text>
</comment>
<comment type="PTM">
    <text evidence="6">(Microbial infection) ADP-ribosylated by the phage T4 protein ModB.</text>
</comment>
<comment type="disruption phenotype">
    <text evidence="4">Non-essential; synthetic lethality is seen in a triple tig-dnaK-dnaJ disruption, although this depends on temperature (triple disruptions grow slowly at 20 and 34 degrees Celsius but not at all at 43 degrees) and strain background.</text>
</comment>
<comment type="similarity">
    <text evidence="10">Belongs to the FKBP-type PPIase family. Tig subfamily.</text>
</comment>